<name>GATB_STAAB</name>
<sequence length="475" mass="53641">MHFETVIGLEVHVELKTDSKMFSPSPAHFGAEPNSNTNVIDLAYPGVLPVVNKRAVDWAMRAAMALNMEIATESKFDRKNYFYPDNPKAYQISQFDQPIGENGYIDIEVDGETKRIGITRLHMEEDAGKSTHKGEYSLVDLNRQGTPLIEIVSEPDIRSPIEAYAYLEKLRSIIQYTGVSDVKMEEGSLRCDANISLRPYGQEKFGTKAELKNLNSFNYVRKGLEYEEKRQEEELLNGGEIGQETRRFDESTGKTILMRVKEGSDDYRYFPEPDIVPLYIDDAWKKRVRQTIPELPDERKAKYVNELGLPAYDAHVLTLTKEMSDFFESTIEHGADVKLTSNWLMGGVNEYLNKNQVELLDTKLTPENLAGMIKLIEDGTMSSKIAKKVFPELAAKGGNAKQIMEDNGLVQISDEATLLKFVNEALDNNEQSVEDYKNGKGKAMGFLVGQIMKASKGQANPQLVNQLLKQELDKR</sequence>
<keyword id="KW-0067">ATP-binding</keyword>
<keyword id="KW-0436">Ligase</keyword>
<keyword id="KW-0547">Nucleotide-binding</keyword>
<keyword id="KW-0648">Protein biosynthesis</keyword>
<evidence type="ECO:0000255" key="1">
    <source>
        <dbReference type="HAMAP-Rule" id="MF_00121"/>
    </source>
</evidence>
<organism>
    <name type="scientific">Staphylococcus aureus (strain bovine RF122 / ET3-1)</name>
    <dbReference type="NCBI Taxonomy" id="273036"/>
    <lineage>
        <taxon>Bacteria</taxon>
        <taxon>Bacillati</taxon>
        <taxon>Bacillota</taxon>
        <taxon>Bacilli</taxon>
        <taxon>Bacillales</taxon>
        <taxon>Staphylococcaceae</taxon>
        <taxon>Staphylococcus</taxon>
    </lineage>
</organism>
<protein>
    <recommendedName>
        <fullName evidence="1">Aspartyl/glutamyl-tRNA(Asn/Gln) amidotransferase subunit B</fullName>
        <shortName evidence="1">Asp/Glu-ADT subunit B</shortName>
        <ecNumber evidence="1">6.3.5.-</ecNumber>
    </recommendedName>
</protein>
<accession>Q2YU27</accession>
<comment type="function">
    <text evidence="1">Allows the formation of correctly charged Asn-tRNA(Asn) or Gln-tRNA(Gln) through the transamidation of misacylated Asp-tRNA(Asn) or Glu-tRNA(Gln) in organisms which lack either or both of asparaginyl-tRNA or glutaminyl-tRNA synthetases. The reaction takes place in the presence of glutamine and ATP through an activated phospho-Asp-tRNA(Asn) or phospho-Glu-tRNA(Gln).</text>
</comment>
<comment type="catalytic activity">
    <reaction evidence="1">
        <text>L-glutamyl-tRNA(Gln) + L-glutamine + ATP + H2O = L-glutaminyl-tRNA(Gln) + L-glutamate + ADP + phosphate + H(+)</text>
        <dbReference type="Rhea" id="RHEA:17521"/>
        <dbReference type="Rhea" id="RHEA-COMP:9681"/>
        <dbReference type="Rhea" id="RHEA-COMP:9684"/>
        <dbReference type="ChEBI" id="CHEBI:15377"/>
        <dbReference type="ChEBI" id="CHEBI:15378"/>
        <dbReference type="ChEBI" id="CHEBI:29985"/>
        <dbReference type="ChEBI" id="CHEBI:30616"/>
        <dbReference type="ChEBI" id="CHEBI:43474"/>
        <dbReference type="ChEBI" id="CHEBI:58359"/>
        <dbReference type="ChEBI" id="CHEBI:78520"/>
        <dbReference type="ChEBI" id="CHEBI:78521"/>
        <dbReference type="ChEBI" id="CHEBI:456216"/>
    </reaction>
</comment>
<comment type="catalytic activity">
    <reaction evidence="1">
        <text>L-aspartyl-tRNA(Asn) + L-glutamine + ATP + H2O = L-asparaginyl-tRNA(Asn) + L-glutamate + ADP + phosphate + 2 H(+)</text>
        <dbReference type="Rhea" id="RHEA:14513"/>
        <dbReference type="Rhea" id="RHEA-COMP:9674"/>
        <dbReference type="Rhea" id="RHEA-COMP:9677"/>
        <dbReference type="ChEBI" id="CHEBI:15377"/>
        <dbReference type="ChEBI" id="CHEBI:15378"/>
        <dbReference type="ChEBI" id="CHEBI:29985"/>
        <dbReference type="ChEBI" id="CHEBI:30616"/>
        <dbReference type="ChEBI" id="CHEBI:43474"/>
        <dbReference type="ChEBI" id="CHEBI:58359"/>
        <dbReference type="ChEBI" id="CHEBI:78515"/>
        <dbReference type="ChEBI" id="CHEBI:78516"/>
        <dbReference type="ChEBI" id="CHEBI:456216"/>
    </reaction>
</comment>
<comment type="subunit">
    <text evidence="1">Heterotrimer of A, B and C subunits.</text>
</comment>
<comment type="similarity">
    <text evidence="1">Belongs to the GatB/GatE family. GatB subfamily.</text>
</comment>
<feature type="chain" id="PRO_0000241276" description="Aspartyl/glutamyl-tRNA(Asn/Gln) amidotransferase subunit B">
    <location>
        <begin position="1"/>
        <end position="475"/>
    </location>
</feature>
<dbReference type="EC" id="6.3.5.-" evidence="1"/>
<dbReference type="EMBL" id="AJ938182">
    <property type="protein sequence ID" value="CAI81521.1"/>
    <property type="molecule type" value="Genomic_DNA"/>
</dbReference>
<dbReference type="RefSeq" id="WP_000545366.1">
    <property type="nucleotide sequence ID" value="NC_007622.1"/>
</dbReference>
<dbReference type="SMR" id="Q2YU27"/>
<dbReference type="KEGG" id="sab:SAB1832c"/>
<dbReference type="HOGENOM" id="CLU_019240_0_0_9"/>
<dbReference type="GO" id="GO:0050566">
    <property type="term" value="F:asparaginyl-tRNA synthase (glutamine-hydrolyzing) activity"/>
    <property type="evidence" value="ECO:0007669"/>
    <property type="project" value="RHEA"/>
</dbReference>
<dbReference type="GO" id="GO:0005524">
    <property type="term" value="F:ATP binding"/>
    <property type="evidence" value="ECO:0007669"/>
    <property type="project" value="UniProtKB-KW"/>
</dbReference>
<dbReference type="GO" id="GO:0050567">
    <property type="term" value="F:glutaminyl-tRNA synthase (glutamine-hydrolyzing) activity"/>
    <property type="evidence" value="ECO:0007669"/>
    <property type="project" value="UniProtKB-UniRule"/>
</dbReference>
<dbReference type="GO" id="GO:0070681">
    <property type="term" value="P:glutaminyl-tRNAGln biosynthesis via transamidation"/>
    <property type="evidence" value="ECO:0007669"/>
    <property type="project" value="TreeGrafter"/>
</dbReference>
<dbReference type="GO" id="GO:0006412">
    <property type="term" value="P:translation"/>
    <property type="evidence" value="ECO:0007669"/>
    <property type="project" value="UniProtKB-UniRule"/>
</dbReference>
<dbReference type="FunFam" id="1.10.10.410:FF:000001">
    <property type="entry name" value="Aspartyl/glutamyl-tRNA(Asn/Gln) amidotransferase subunit B"/>
    <property type="match status" value="1"/>
</dbReference>
<dbReference type="FunFam" id="1.10.150.380:FF:000001">
    <property type="entry name" value="Aspartyl/glutamyl-tRNA(Asn/Gln) amidotransferase subunit B"/>
    <property type="match status" value="1"/>
</dbReference>
<dbReference type="Gene3D" id="1.10.10.410">
    <property type="match status" value="1"/>
</dbReference>
<dbReference type="Gene3D" id="1.10.150.380">
    <property type="entry name" value="GatB domain, N-terminal subdomain"/>
    <property type="match status" value="1"/>
</dbReference>
<dbReference type="HAMAP" id="MF_00121">
    <property type="entry name" value="GatB"/>
    <property type="match status" value="1"/>
</dbReference>
<dbReference type="InterPro" id="IPR017959">
    <property type="entry name" value="Asn/Gln-tRNA_amidoTrfase_suB/E"/>
</dbReference>
<dbReference type="InterPro" id="IPR006075">
    <property type="entry name" value="Asn/Gln-tRNA_Trfase_suB/E_cat"/>
</dbReference>
<dbReference type="InterPro" id="IPR018027">
    <property type="entry name" value="Asn/Gln_amidotransferase"/>
</dbReference>
<dbReference type="InterPro" id="IPR003789">
    <property type="entry name" value="Asn/Gln_tRNA_amidoTrase-B-like"/>
</dbReference>
<dbReference type="InterPro" id="IPR004413">
    <property type="entry name" value="GatB"/>
</dbReference>
<dbReference type="InterPro" id="IPR042114">
    <property type="entry name" value="GatB_C_1"/>
</dbReference>
<dbReference type="InterPro" id="IPR023168">
    <property type="entry name" value="GatB_Yqey_C_2"/>
</dbReference>
<dbReference type="InterPro" id="IPR017958">
    <property type="entry name" value="Gln-tRNA_amidoTrfase_suB_CS"/>
</dbReference>
<dbReference type="InterPro" id="IPR014746">
    <property type="entry name" value="Gln_synth/guanido_kin_cat_dom"/>
</dbReference>
<dbReference type="NCBIfam" id="TIGR00133">
    <property type="entry name" value="gatB"/>
    <property type="match status" value="1"/>
</dbReference>
<dbReference type="NCBIfam" id="NF004011">
    <property type="entry name" value="PRK05477.1-1"/>
    <property type="match status" value="1"/>
</dbReference>
<dbReference type="NCBIfam" id="NF004012">
    <property type="entry name" value="PRK05477.1-2"/>
    <property type="match status" value="1"/>
</dbReference>
<dbReference type="NCBIfam" id="NF004014">
    <property type="entry name" value="PRK05477.1-4"/>
    <property type="match status" value="1"/>
</dbReference>
<dbReference type="PANTHER" id="PTHR11659">
    <property type="entry name" value="GLUTAMYL-TRNA GLN AMIDOTRANSFERASE SUBUNIT B MITOCHONDRIAL AND PROKARYOTIC PET112-RELATED"/>
    <property type="match status" value="1"/>
</dbReference>
<dbReference type="PANTHER" id="PTHR11659:SF0">
    <property type="entry name" value="GLUTAMYL-TRNA(GLN) AMIDOTRANSFERASE SUBUNIT B, MITOCHONDRIAL"/>
    <property type="match status" value="1"/>
</dbReference>
<dbReference type="Pfam" id="PF02934">
    <property type="entry name" value="GatB_N"/>
    <property type="match status" value="1"/>
</dbReference>
<dbReference type="Pfam" id="PF02637">
    <property type="entry name" value="GatB_Yqey"/>
    <property type="match status" value="1"/>
</dbReference>
<dbReference type="SMART" id="SM00845">
    <property type="entry name" value="GatB_Yqey"/>
    <property type="match status" value="1"/>
</dbReference>
<dbReference type="SUPFAM" id="SSF89095">
    <property type="entry name" value="GatB/YqeY motif"/>
    <property type="match status" value="1"/>
</dbReference>
<dbReference type="SUPFAM" id="SSF55931">
    <property type="entry name" value="Glutamine synthetase/guanido kinase"/>
    <property type="match status" value="1"/>
</dbReference>
<dbReference type="PROSITE" id="PS01234">
    <property type="entry name" value="GATB"/>
    <property type="match status" value="1"/>
</dbReference>
<reference key="1">
    <citation type="journal article" date="2007" name="PLoS ONE">
        <title>Molecular correlates of host specialization in Staphylococcus aureus.</title>
        <authorList>
            <person name="Herron-Olson L."/>
            <person name="Fitzgerald J.R."/>
            <person name="Musser J.M."/>
            <person name="Kapur V."/>
        </authorList>
    </citation>
    <scope>NUCLEOTIDE SEQUENCE [LARGE SCALE GENOMIC DNA]</scope>
    <source>
        <strain>bovine RF122 / ET3-1</strain>
    </source>
</reference>
<proteinExistence type="inferred from homology"/>
<gene>
    <name evidence="1" type="primary">gatB</name>
    <name type="ordered locus">SAB1832c</name>
</gene>